<proteinExistence type="inferred from homology"/>
<gene>
    <name evidence="1" type="primary">thrS</name>
    <name type="ordered locus">Mflv_3838</name>
</gene>
<accession>A4TD09</accession>
<reference key="1">
    <citation type="submission" date="2007-04" db="EMBL/GenBank/DDBJ databases">
        <title>Complete sequence of chromosome of Mycobacterium gilvum PYR-GCK.</title>
        <authorList>
            <consortium name="US DOE Joint Genome Institute"/>
            <person name="Copeland A."/>
            <person name="Lucas S."/>
            <person name="Lapidus A."/>
            <person name="Barry K."/>
            <person name="Detter J.C."/>
            <person name="Glavina del Rio T."/>
            <person name="Hammon N."/>
            <person name="Israni S."/>
            <person name="Dalin E."/>
            <person name="Tice H."/>
            <person name="Pitluck S."/>
            <person name="Chain P."/>
            <person name="Malfatti S."/>
            <person name="Shin M."/>
            <person name="Vergez L."/>
            <person name="Schmutz J."/>
            <person name="Larimer F."/>
            <person name="Land M."/>
            <person name="Hauser L."/>
            <person name="Kyrpides N."/>
            <person name="Mikhailova N."/>
            <person name="Miller C."/>
            <person name="Richardson P."/>
        </authorList>
    </citation>
    <scope>NUCLEOTIDE SEQUENCE [LARGE SCALE GENOMIC DNA]</scope>
    <source>
        <strain>PYR-GCK</strain>
    </source>
</reference>
<feature type="chain" id="PRO_1000077364" description="Threonine--tRNA ligase">
    <location>
        <begin position="1"/>
        <end position="695"/>
    </location>
</feature>
<feature type="domain" description="TGS" evidence="2">
    <location>
        <begin position="1"/>
        <end position="66"/>
    </location>
</feature>
<feature type="region of interest" description="Catalytic" evidence="1">
    <location>
        <begin position="263"/>
        <end position="569"/>
    </location>
</feature>
<feature type="binding site" evidence="1">
    <location>
        <position position="368"/>
    </location>
    <ligand>
        <name>Zn(2+)</name>
        <dbReference type="ChEBI" id="CHEBI:29105"/>
    </ligand>
</feature>
<feature type="binding site" evidence="1">
    <location>
        <position position="419"/>
    </location>
    <ligand>
        <name>Zn(2+)</name>
        <dbReference type="ChEBI" id="CHEBI:29105"/>
    </ligand>
</feature>
<feature type="binding site" evidence="1">
    <location>
        <position position="546"/>
    </location>
    <ligand>
        <name>Zn(2+)</name>
        <dbReference type="ChEBI" id="CHEBI:29105"/>
    </ligand>
</feature>
<organism>
    <name type="scientific">Mycolicibacterium gilvum (strain PYR-GCK)</name>
    <name type="common">Mycobacterium gilvum (strain PYR-GCK)</name>
    <dbReference type="NCBI Taxonomy" id="350054"/>
    <lineage>
        <taxon>Bacteria</taxon>
        <taxon>Bacillati</taxon>
        <taxon>Actinomycetota</taxon>
        <taxon>Actinomycetes</taxon>
        <taxon>Mycobacteriales</taxon>
        <taxon>Mycobacteriaceae</taxon>
        <taxon>Mycolicibacterium</taxon>
    </lineage>
</organism>
<dbReference type="EC" id="6.1.1.3" evidence="1"/>
<dbReference type="EMBL" id="CP000656">
    <property type="protein sequence ID" value="ABP46310.1"/>
    <property type="molecule type" value="Genomic_DNA"/>
</dbReference>
<dbReference type="SMR" id="A4TD09"/>
<dbReference type="STRING" id="350054.Mflv_3838"/>
<dbReference type="KEGG" id="mgi:Mflv_3838"/>
<dbReference type="eggNOG" id="COG0441">
    <property type="taxonomic scope" value="Bacteria"/>
</dbReference>
<dbReference type="HOGENOM" id="CLU_008554_0_1_11"/>
<dbReference type="OrthoDB" id="9802304at2"/>
<dbReference type="GO" id="GO:0005737">
    <property type="term" value="C:cytoplasm"/>
    <property type="evidence" value="ECO:0007669"/>
    <property type="project" value="UniProtKB-SubCell"/>
</dbReference>
<dbReference type="GO" id="GO:0005524">
    <property type="term" value="F:ATP binding"/>
    <property type="evidence" value="ECO:0007669"/>
    <property type="project" value="UniProtKB-UniRule"/>
</dbReference>
<dbReference type="GO" id="GO:0046872">
    <property type="term" value="F:metal ion binding"/>
    <property type="evidence" value="ECO:0007669"/>
    <property type="project" value="UniProtKB-KW"/>
</dbReference>
<dbReference type="GO" id="GO:0004829">
    <property type="term" value="F:threonine-tRNA ligase activity"/>
    <property type="evidence" value="ECO:0007669"/>
    <property type="project" value="UniProtKB-UniRule"/>
</dbReference>
<dbReference type="GO" id="GO:0000049">
    <property type="term" value="F:tRNA binding"/>
    <property type="evidence" value="ECO:0007669"/>
    <property type="project" value="UniProtKB-KW"/>
</dbReference>
<dbReference type="GO" id="GO:0006435">
    <property type="term" value="P:threonyl-tRNA aminoacylation"/>
    <property type="evidence" value="ECO:0007669"/>
    <property type="project" value="UniProtKB-UniRule"/>
</dbReference>
<dbReference type="CDD" id="cd00860">
    <property type="entry name" value="ThrRS_anticodon"/>
    <property type="match status" value="1"/>
</dbReference>
<dbReference type="CDD" id="cd00771">
    <property type="entry name" value="ThrRS_core"/>
    <property type="match status" value="1"/>
</dbReference>
<dbReference type="FunFam" id="3.30.54.20:FF:000003">
    <property type="entry name" value="Threonine--tRNA ligase"/>
    <property type="match status" value="1"/>
</dbReference>
<dbReference type="FunFam" id="3.30.930.10:FF:000019">
    <property type="entry name" value="Threonine--tRNA ligase"/>
    <property type="match status" value="1"/>
</dbReference>
<dbReference type="FunFam" id="3.40.50.800:FF:000001">
    <property type="entry name" value="Threonine--tRNA ligase"/>
    <property type="match status" value="1"/>
</dbReference>
<dbReference type="FunFam" id="3.30.980.10:FF:000005">
    <property type="entry name" value="Threonyl-tRNA synthetase, mitochondrial"/>
    <property type="match status" value="1"/>
</dbReference>
<dbReference type="Gene3D" id="3.30.54.20">
    <property type="match status" value="1"/>
</dbReference>
<dbReference type="Gene3D" id="3.40.50.800">
    <property type="entry name" value="Anticodon-binding domain"/>
    <property type="match status" value="1"/>
</dbReference>
<dbReference type="Gene3D" id="3.30.930.10">
    <property type="entry name" value="Bira Bifunctional Protein, Domain 2"/>
    <property type="match status" value="1"/>
</dbReference>
<dbReference type="Gene3D" id="3.30.980.10">
    <property type="entry name" value="Threonyl-trna Synthetase, Chain A, domain 2"/>
    <property type="match status" value="1"/>
</dbReference>
<dbReference type="HAMAP" id="MF_00184">
    <property type="entry name" value="Thr_tRNA_synth"/>
    <property type="match status" value="1"/>
</dbReference>
<dbReference type="InterPro" id="IPR002314">
    <property type="entry name" value="aa-tRNA-synt_IIb"/>
</dbReference>
<dbReference type="InterPro" id="IPR006195">
    <property type="entry name" value="aa-tRNA-synth_II"/>
</dbReference>
<dbReference type="InterPro" id="IPR045864">
    <property type="entry name" value="aa-tRNA-synth_II/BPL/LPL"/>
</dbReference>
<dbReference type="InterPro" id="IPR004154">
    <property type="entry name" value="Anticodon-bd"/>
</dbReference>
<dbReference type="InterPro" id="IPR036621">
    <property type="entry name" value="Anticodon-bd_dom_sf"/>
</dbReference>
<dbReference type="InterPro" id="IPR004095">
    <property type="entry name" value="TGS"/>
</dbReference>
<dbReference type="InterPro" id="IPR002320">
    <property type="entry name" value="Thr-tRNA-ligase_IIa"/>
</dbReference>
<dbReference type="InterPro" id="IPR018163">
    <property type="entry name" value="Thr/Ala-tRNA-synth_IIc_edit"/>
</dbReference>
<dbReference type="InterPro" id="IPR047246">
    <property type="entry name" value="ThrRS_anticodon"/>
</dbReference>
<dbReference type="InterPro" id="IPR033728">
    <property type="entry name" value="ThrRS_core"/>
</dbReference>
<dbReference type="InterPro" id="IPR012947">
    <property type="entry name" value="tRNA_SAD"/>
</dbReference>
<dbReference type="NCBIfam" id="TIGR00418">
    <property type="entry name" value="thrS"/>
    <property type="match status" value="1"/>
</dbReference>
<dbReference type="PANTHER" id="PTHR11451:SF44">
    <property type="entry name" value="THREONINE--TRNA LIGASE, CHLOROPLASTIC_MITOCHONDRIAL 2"/>
    <property type="match status" value="1"/>
</dbReference>
<dbReference type="PANTHER" id="PTHR11451">
    <property type="entry name" value="THREONINE-TRNA LIGASE"/>
    <property type="match status" value="1"/>
</dbReference>
<dbReference type="Pfam" id="PF03129">
    <property type="entry name" value="HGTP_anticodon"/>
    <property type="match status" value="1"/>
</dbReference>
<dbReference type="Pfam" id="PF00587">
    <property type="entry name" value="tRNA-synt_2b"/>
    <property type="match status" value="1"/>
</dbReference>
<dbReference type="Pfam" id="PF07973">
    <property type="entry name" value="tRNA_SAD"/>
    <property type="match status" value="1"/>
</dbReference>
<dbReference type="PRINTS" id="PR01047">
    <property type="entry name" value="TRNASYNTHTHR"/>
</dbReference>
<dbReference type="SMART" id="SM00863">
    <property type="entry name" value="tRNA_SAD"/>
    <property type="match status" value="1"/>
</dbReference>
<dbReference type="SUPFAM" id="SSF52954">
    <property type="entry name" value="Class II aaRS ABD-related"/>
    <property type="match status" value="1"/>
</dbReference>
<dbReference type="SUPFAM" id="SSF55681">
    <property type="entry name" value="Class II aaRS and biotin synthetases"/>
    <property type="match status" value="1"/>
</dbReference>
<dbReference type="SUPFAM" id="SSF55186">
    <property type="entry name" value="ThrRS/AlaRS common domain"/>
    <property type="match status" value="1"/>
</dbReference>
<dbReference type="PROSITE" id="PS50862">
    <property type="entry name" value="AA_TRNA_LIGASE_II"/>
    <property type="match status" value="1"/>
</dbReference>
<dbReference type="PROSITE" id="PS51880">
    <property type="entry name" value="TGS"/>
    <property type="match status" value="1"/>
</dbReference>
<comment type="function">
    <text evidence="1">Catalyzes the attachment of threonine to tRNA(Thr) in a two-step reaction: L-threonine is first activated by ATP to form Thr-AMP and then transferred to the acceptor end of tRNA(Thr). Also edits incorrectly charged L-seryl-tRNA(Thr).</text>
</comment>
<comment type="catalytic activity">
    <reaction evidence="1">
        <text>tRNA(Thr) + L-threonine + ATP = L-threonyl-tRNA(Thr) + AMP + diphosphate + H(+)</text>
        <dbReference type="Rhea" id="RHEA:24624"/>
        <dbReference type="Rhea" id="RHEA-COMP:9670"/>
        <dbReference type="Rhea" id="RHEA-COMP:9704"/>
        <dbReference type="ChEBI" id="CHEBI:15378"/>
        <dbReference type="ChEBI" id="CHEBI:30616"/>
        <dbReference type="ChEBI" id="CHEBI:33019"/>
        <dbReference type="ChEBI" id="CHEBI:57926"/>
        <dbReference type="ChEBI" id="CHEBI:78442"/>
        <dbReference type="ChEBI" id="CHEBI:78534"/>
        <dbReference type="ChEBI" id="CHEBI:456215"/>
        <dbReference type="EC" id="6.1.1.3"/>
    </reaction>
</comment>
<comment type="cofactor">
    <cofactor evidence="1">
        <name>Zn(2+)</name>
        <dbReference type="ChEBI" id="CHEBI:29105"/>
    </cofactor>
    <text evidence="1">Binds 1 zinc ion per subunit.</text>
</comment>
<comment type="subunit">
    <text evidence="1">Homodimer.</text>
</comment>
<comment type="subcellular location">
    <subcellularLocation>
        <location evidence="1">Cytoplasm</location>
    </subcellularLocation>
</comment>
<comment type="similarity">
    <text evidence="1">Belongs to the class-II aminoacyl-tRNA synthetase family.</text>
</comment>
<evidence type="ECO:0000255" key="1">
    <source>
        <dbReference type="HAMAP-Rule" id="MF_00184"/>
    </source>
</evidence>
<evidence type="ECO:0000255" key="2">
    <source>
        <dbReference type="PROSITE-ProRule" id="PRU01228"/>
    </source>
</evidence>
<protein>
    <recommendedName>
        <fullName evidence="1">Threonine--tRNA ligase</fullName>
        <ecNumber evidence="1">6.1.1.3</ecNumber>
    </recommendedName>
    <alternativeName>
        <fullName evidence="1">Threonyl-tRNA synthetase</fullName>
        <shortName evidence="1">ThrRS</shortName>
    </alternativeName>
</protein>
<sequence length="695" mass="77831">MSAPARPAPAAPIRVTAGTTAGQAVRDAGLPSRGAPDAVVVVRDADGRLRDLSWVPDTDVEVTPVAADTEDGRSVIRHSAAHVLAQAVQEMFPDAKLGIGPPITDGFYYDFDVAEPFTPEHLQALEKKMRKIVKDGQIFERRVFGSKDEARAELASEPYKLELIDDKSGADDPEVMEVGGDELTAYDNLNPRTRERVWGDLCRGPHIPTTRYIPAFTLTRSSAAYWRGDQNNASLQRIYGTAWESQEALDRHLELIEEAQRRDHRKLGVELDLFSFPDELGSGLPVFHPKGGVVRRELEEYSRRKHIEAGYEFVNTPHITKEQLYITSGHLEWYADGMFPPMQIDAEYNEDGTVRKPGQDYYLKPMNCPMHHLIYRSRGRSYRELPLRLFEFGSVYRYEKSGVIHGLTRVRGMTQDDAHIYCTREEMRDELARLLQFVLDLLADYGLDDFYLELSTKDPDKFVGSDDLWEEATETLREVAESSGLALVPDPGGAAFYGPKISVQVRDALGRNWQMSTIQLDFNMPDRFELEYTSSDGTRRRPVLIHRALFGSIERFFGVLTEHYAGAFPVWLAPVQVVGIPVADAHAGYLDGVAAELRRRGIRVEVDASDDRMAKKIVNHTNQKVPFMLLAGDKDVEAGAVSFRFGDRTQINGVPRDQAVEAIVDWVNRRENATPTAELVVLPSGDAQSPVAGEG</sequence>
<name>SYT_MYCGI</name>
<keyword id="KW-0030">Aminoacyl-tRNA synthetase</keyword>
<keyword id="KW-0067">ATP-binding</keyword>
<keyword id="KW-0963">Cytoplasm</keyword>
<keyword id="KW-0436">Ligase</keyword>
<keyword id="KW-0479">Metal-binding</keyword>
<keyword id="KW-0547">Nucleotide-binding</keyword>
<keyword id="KW-0648">Protein biosynthesis</keyword>
<keyword id="KW-0694">RNA-binding</keyword>
<keyword id="KW-0820">tRNA-binding</keyword>
<keyword id="KW-0862">Zinc</keyword>